<dbReference type="EC" id="7.1.2.2" evidence="1"/>
<dbReference type="EMBL" id="CP000744">
    <property type="protein sequence ID" value="ABR84375.1"/>
    <property type="molecule type" value="Genomic_DNA"/>
</dbReference>
<dbReference type="RefSeq" id="WP_003097130.1">
    <property type="nucleotide sequence ID" value="NC_009656.1"/>
</dbReference>
<dbReference type="SMR" id="A6VF32"/>
<dbReference type="GeneID" id="77224107"/>
<dbReference type="KEGG" id="pap:PSPA7_6356"/>
<dbReference type="HOGENOM" id="CLU_022398_0_2_6"/>
<dbReference type="Proteomes" id="UP000001582">
    <property type="component" value="Chromosome"/>
</dbReference>
<dbReference type="GO" id="GO:0005886">
    <property type="term" value="C:plasma membrane"/>
    <property type="evidence" value="ECO:0007669"/>
    <property type="project" value="UniProtKB-SubCell"/>
</dbReference>
<dbReference type="GO" id="GO:0045259">
    <property type="term" value="C:proton-transporting ATP synthase complex"/>
    <property type="evidence" value="ECO:0007669"/>
    <property type="project" value="UniProtKB-KW"/>
</dbReference>
<dbReference type="GO" id="GO:0005524">
    <property type="term" value="F:ATP binding"/>
    <property type="evidence" value="ECO:0007669"/>
    <property type="project" value="UniProtKB-UniRule"/>
</dbReference>
<dbReference type="GO" id="GO:0016887">
    <property type="term" value="F:ATP hydrolysis activity"/>
    <property type="evidence" value="ECO:0007669"/>
    <property type="project" value="InterPro"/>
</dbReference>
<dbReference type="GO" id="GO:0046933">
    <property type="term" value="F:proton-transporting ATP synthase activity, rotational mechanism"/>
    <property type="evidence" value="ECO:0007669"/>
    <property type="project" value="UniProtKB-UniRule"/>
</dbReference>
<dbReference type="CDD" id="cd18110">
    <property type="entry name" value="ATP-synt_F1_beta_C"/>
    <property type="match status" value="1"/>
</dbReference>
<dbReference type="CDD" id="cd18115">
    <property type="entry name" value="ATP-synt_F1_beta_N"/>
    <property type="match status" value="1"/>
</dbReference>
<dbReference type="CDD" id="cd01133">
    <property type="entry name" value="F1-ATPase_beta_CD"/>
    <property type="match status" value="1"/>
</dbReference>
<dbReference type="FunFam" id="1.10.1140.10:FF:000001">
    <property type="entry name" value="ATP synthase subunit beta"/>
    <property type="match status" value="1"/>
</dbReference>
<dbReference type="FunFam" id="3.40.50.300:FF:000004">
    <property type="entry name" value="ATP synthase subunit beta"/>
    <property type="match status" value="1"/>
</dbReference>
<dbReference type="Gene3D" id="2.40.10.170">
    <property type="match status" value="1"/>
</dbReference>
<dbReference type="Gene3D" id="1.10.1140.10">
    <property type="entry name" value="Bovine Mitochondrial F1-atpase, Atp Synthase Beta Chain, Chain D, domain 3"/>
    <property type="match status" value="1"/>
</dbReference>
<dbReference type="Gene3D" id="3.40.50.300">
    <property type="entry name" value="P-loop containing nucleotide triphosphate hydrolases"/>
    <property type="match status" value="1"/>
</dbReference>
<dbReference type="HAMAP" id="MF_01347">
    <property type="entry name" value="ATP_synth_beta_bact"/>
    <property type="match status" value="1"/>
</dbReference>
<dbReference type="InterPro" id="IPR003593">
    <property type="entry name" value="AAA+_ATPase"/>
</dbReference>
<dbReference type="InterPro" id="IPR055190">
    <property type="entry name" value="ATP-synt_VA_C"/>
</dbReference>
<dbReference type="InterPro" id="IPR005722">
    <property type="entry name" value="ATP_synth_F1_bsu"/>
</dbReference>
<dbReference type="InterPro" id="IPR020003">
    <property type="entry name" value="ATPase_a/bsu_AS"/>
</dbReference>
<dbReference type="InterPro" id="IPR050053">
    <property type="entry name" value="ATPase_alpha/beta_chains"/>
</dbReference>
<dbReference type="InterPro" id="IPR004100">
    <property type="entry name" value="ATPase_F1/V1/A1_a/bsu_N"/>
</dbReference>
<dbReference type="InterPro" id="IPR036121">
    <property type="entry name" value="ATPase_F1/V1/A1_a/bsu_N_sf"/>
</dbReference>
<dbReference type="InterPro" id="IPR000194">
    <property type="entry name" value="ATPase_F1/V1/A1_a/bsu_nucl-bd"/>
</dbReference>
<dbReference type="InterPro" id="IPR024034">
    <property type="entry name" value="ATPase_F1/V1_b/a_C"/>
</dbReference>
<dbReference type="InterPro" id="IPR027417">
    <property type="entry name" value="P-loop_NTPase"/>
</dbReference>
<dbReference type="NCBIfam" id="TIGR01039">
    <property type="entry name" value="atpD"/>
    <property type="match status" value="1"/>
</dbReference>
<dbReference type="PANTHER" id="PTHR15184">
    <property type="entry name" value="ATP SYNTHASE"/>
    <property type="match status" value="1"/>
</dbReference>
<dbReference type="PANTHER" id="PTHR15184:SF71">
    <property type="entry name" value="ATP SYNTHASE SUBUNIT BETA, MITOCHONDRIAL"/>
    <property type="match status" value="1"/>
</dbReference>
<dbReference type="Pfam" id="PF00006">
    <property type="entry name" value="ATP-synt_ab"/>
    <property type="match status" value="1"/>
</dbReference>
<dbReference type="Pfam" id="PF02874">
    <property type="entry name" value="ATP-synt_ab_N"/>
    <property type="match status" value="1"/>
</dbReference>
<dbReference type="Pfam" id="PF22919">
    <property type="entry name" value="ATP-synt_VA_C"/>
    <property type="match status" value="1"/>
</dbReference>
<dbReference type="SMART" id="SM00382">
    <property type="entry name" value="AAA"/>
    <property type="match status" value="1"/>
</dbReference>
<dbReference type="SUPFAM" id="SSF47917">
    <property type="entry name" value="C-terminal domain of alpha and beta subunits of F1 ATP synthase"/>
    <property type="match status" value="1"/>
</dbReference>
<dbReference type="SUPFAM" id="SSF50615">
    <property type="entry name" value="N-terminal domain of alpha and beta subunits of F1 ATP synthase"/>
    <property type="match status" value="1"/>
</dbReference>
<dbReference type="SUPFAM" id="SSF52540">
    <property type="entry name" value="P-loop containing nucleoside triphosphate hydrolases"/>
    <property type="match status" value="1"/>
</dbReference>
<dbReference type="PROSITE" id="PS00152">
    <property type="entry name" value="ATPASE_ALPHA_BETA"/>
    <property type="match status" value="1"/>
</dbReference>
<name>ATPB_PSEP7</name>
<comment type="function">
    <text evidence="1">Produces ATP from ADP in the presence of a proton gradient across the membrane. The catalytic sites are hosted primarily by the beta subunits.</text>
</comment>
<comment type="catalytic activity">
    <reaction evidence="1">
        <text>ATP + H2O + 4 H(+)(in) = ADP + phosphate + 5 H(+)(out)</text>
        <dbReference type="Rhea" id="RHEA:57720"/>
        <dbReference type="ChEBI" id="CHEBI:15377"/>
        <dbReference type="ChEBI" id="CHEBI:15378"/>
        <dbReference type="ChEBI" id="CHEBI:30616"/>
        <dbReference type="ChEBI" id="CHEBI:43474"/>
        <dbReference type="ChEBI" id="CHEBI:456216"/>
        <dbReference type="EC" id="7.1.2.2"/>
    </reaction>
</comment>
<comment type="subunit">
    <text evidence="1">F-type ATPases have 2 components, CF(1) - the catalytic core - and CF(0) - the membrane proton channel. CF(1) has five subunits: alpha(3), beta(3), gamma(1), delta(1), epsilon(1). CF(0) has three main subunits: a(1), b(2) and c(9-12). The alpha and beta chains form an alternating ring which encloses part of the gamma chain. CF(1) is attached to CF(0) by a central stalk formed by the gamma and epsilon chains, while a peripheral stalk is formed by the delta and b chains.</text>
</comment>
<comment type="subcellular location">
    <subcellularLocation>
        <location evidence="1">Cell inner membrane</location>
        <topology evidence="1">Peripheral membrane protein</topology>
    </subcellularLocation>
</comment>
<comment type="similarity">
    <text evidence="1">Belongs to the ATPase alpha/beta chains family.</text>
</comment>
<organism>
    <name type="scientific">Pseudomonas paraeruginosa (strain DSM 24068 / PA7)</name>
    <name type="common">Pseudomonas aeruginosa (strain PA7)</name>
    <dbReference type="NCBI Taxonomy" id="381754"/>
    <lineage>
        <taxon>Bacteria</taxon>
        <taxon>Pseudomonadati</taxon>
        <taxon>Pseudomonadota</taxon>
        <taxon>Gammaproteobacteria</taxon>
        <taxon>Pseudomonadales</taxon>
        <taxon>Pseudomonadaceae</taxon>
        <taxon>Pseudomonas</taxon>
        <taxon>Pseudomonas paraeruginosa</taxon>
    </lineage>
</organism>
<reference key="1">
    <citation type="submission" date="2007-06" db="EMBL/GenBank/DDBJ databases">
        <authorList>
            <person name="Dodson R.J."/>
            <person name="Harkins D."/>
            <person name="Paulsen I.T."/>
        </authorList>
    </citation>
    <scope>NUCLEOTIDE SEQUENCE [LARGE SCALE GENOMIC DNA]</scope>
    <source>
        <strain>DSM 24068 / PA7</strain>
    </source>
</reference>
<sequence>MSSGRIVQIIGAVIDVEFPRDAVPSIYEALKVQGVETTLEVQQQLGDGVVRSIAMGSTEGLKRGLNVDSTGAAISVPVGKATLGRIMDVLGNPIDEAGPIGEEERWGIHREAPSYADQAGGNELLETGIKVIDLVCPFAKGGKVGLFGGAGVGKTVNMMELIRNIAIEHSGYSVFAGVGERTREGNDFYHEMKDSNVLDKVALVYGQMNEPPGNRLRVALTGLTMAEKFRDEGRDVLLFIDNIYRYTLAGTEVSALLGRMPSAVGYQPTLAEEMGVLQERITSTKKGSITSIQAVYVPADDLTDPSPATTFAHLDATVVLSRDIASLGIYPAVDPLDSTSRQLDPLVIGQDHYDTARGVQYVLQRYKELKDIIAILGMDELSEADKLLVARARKIQRFLSQPFFVAEVFTGSPGKYVSLKDTIAGFKGILNGDYDHLPEQAFYMVGGIEEAVEKAKKL</sequence>
<protein>
    <recommendedName>
        <fullName evidence="1">ATP synthase subunit beta</fullName>
        <ecNumber evidence="1">7.1.2.2</ecNumber>
    </recommendedName>
    <alternativeName>
        <fullName evidence="1">ATP synthase F1 sector subunit beta</fullName>
    </alternativeName>
    <alternativeName>
        <fullName evidence="1">F-ATPase subunit beta</fullName>
    </alternativeName>
</protein>
<gene>
    <name evidence="1" type="primary">atpD</name>
    <name type="ordered locus">PSPA7_6356</name>
</gene>
<proteinExistence type="inferred from homology"/>
<accession>A6VF32</accession>
<feature type="chain" id="PRO_1000067728" description="ATP synthase subunit beta">
    <location>
        <begin position="1"/>
        <end position="458"/>
    </location>
</feature>
<feature type="binding site" evidence="1">
    <location>
        <begin position="148"/>
        <end position="155"/>
    </location>
    <ligand>
        <name>ATP</name>
        <dbReference type="ChEBI" id="CHEBI:30616"/>
    </ligand>
</feature>
<evidence type="ECO:0000255" key="1">
    <source>
        <dbReference type="HAMAP-Rule" id="MF_01347"/>
    </source>
</evidence>
<keyword id="KW-0066">ATP synthesis</keyword>
<keyword id="KW-0067">ATP-binding</keyword>
<keyword id="KW-0997">Cell inner membrane</keyword>
<keyword id="KW-1003">Cell membrane</keyword>
<keyword id="KW-0139">CF(1)</keyword>
<keyword id="KW-0375">Hydrogen ion transport</keyword>
<keyword id="KW-0406">Ion transport</keyword>
<keyword id="KW-0472">Membrane</keyword>
<keyword id="KW-0547">Nucleotide-binding</keyword>
<keyword id="KW-1278">Translocase</keyword>
<keyword id="KW-0813">Transport</keyword>